<proteinExistence type="inferred from homology"/>
<protein>
    <recommendedName>
        <fullName evidence="1">Nucleoside diphosphate kinase</fullName>
        <shortName evidence="1">NDK</shortName>
        <shortName evidence="1">NDP kinase</shortName>
        <ecNumber evidence="1">2.7.4.6</ecNumber>
    </recommendedName>
    <alternativeName>
        <fullName evidence="1">Nucleoside-2-P kinase</fullName>
    </alternativeName>
</protein>
<gene>
    <name evidence="1" type="primary">ndk</name>
    <name type="ordered locus">YPTB2845</name>
</gene>
<sequence length="142" mass="15527">MALERTFSIIKPNAVANNNIGAIYARFESAGFKIIAAKMLHLTKEQAEGFYAEHKGRPFFDGLVEFMTSGPIIVQVLEGENAVQRHRDIMGATNPDNALAGTLRADFADSFTANAVHGSDAVESAQREIAYFFAADEIFPRS</sequence>
<name>NDK_YERPS</name>
<dbReference type="EC" id="2.7.4.6" evidence="1"/>
<dbReference type="EMBL" id="BX936398">
    <property type="protein sequence ID" value="CAH22083.1"/>
    <property type="molecule type" value="Genomic_DNA"/>
</dbReference>
<dbReference type="RefSeq" id="WP_011192804.1">
    <property type="nucleotide sequence ID" value="NC_006155.1"/>
</dbReference>
<dbReference type="SMR" id="Q667Z5"/>
<dbReference type="KEGG" id="ypo:BZ17_3785"/>
<dbReference type="KEGG" id="yps:YPTB2845"/>
<dbReference type="PATRIC" id="fig|273123.14.peg.3971"/>
<dbReference type="Proteomes" id="UP000001011">
    <property type="component" value="Chromosome"/>
</dbReference>
<dbReference type="GO" id="GO:0005737">
    <property type="term" value="C:cytoplasm"/>
    <property type="evidence" value="ECO:0007669"/>
    <property type="project" value="UniProtKB-SubCell"/>
</dbReference>
<dbReference type="GO" id="GO:0005524">
    <property type="term" value="F:ATP binding"/>
    <property type="evidence" value="ECO:0007669"/>
    <property type="project" value="UniProtKB-UniRule"/>
</dbReference>
<dbReference type="GO" id="GO:0046872">
    <property type="term" value="F:metal ion binding"/>
    <property type="evidence" value="ECO:0007669"/>
    <property type="project" value="UniProtKB-KW"/>
</dbReference>
<dbReference type="GO" id="GO:0004550">
    <property type="term" value="F:nucleoside diphosphate kinase activity"/>
    <property type="evidence" value="ECO:0007669"/>
    <property type="project" value="UniProtKB-UniRule"/>
</dbReference>
<dbReference type="GO" id="GO:0006241">
    <property type="term" value="P:CTP biosynthetic process"/>
    <property type="evidence" value="ECO:0007669"/>
    <property type="project" value="UniProtKB-UniRule"/>
</dbReference>
<dbReference type="GO" id="GO:0006183">
    <property type="term" value="P:GTP biosynthetic process"/>
    <property type="evidence" value="ECO:0007669"/>
    <property type="project" value="UniProtKB-UniRule"/>
</dbReference>
<dbReference type="GO" id="GO:0006228">
    <property type="term" value="P:UTP biosynthetic process"/>
    <property type="evidence" value="ECO:0007669"/>
    <property type="project" value="UniProtKB-UniRule"/>
</dbReference>
<dbReference type="CDD" id="cd04413">
    <property type="entry name" value="NDPk_I"/>
    <property type="match status" value="1"/>
</dbReference>
<dbReference type="FunFam" id="3.30.70.141:FF:000001">
    <property type="entry name" value="Nucleoside diphosphate kinase"/>
    <property type="match status" value="1"/>
</dbReference>
<dbReference type="Gene3D" id="3.30.70.141">
    <property type="entry name" value="Nucleoside diphosphate kinase-like domain"/>
    <property type="match status" value="1"/>
</dbReference>
<dbReference type="HAMAP" id="MF_00451">
    <property type="entry name" value="NDP_kinase"/>
    <property type="match status" value="1"/>
</dbReference>
<dbReference type="InterPro" id="IPR034907">
    <property type="entry name" value="NDK-like_dom"/>
</dbReference>
<dbReference type="InterPro" id="IPR036850">
    <property type="entry name" value="NDK-like_dom_sf"/>
</dbReference>
<dbReference type="InterPro" id="IPR001564">
    <property type="entry name" value="Nucleoside_diP_kinase"/>
</dbReference>
<dbReference type="InterPro" id="IPR023005">
    <property type="entry name" value="Nucleoside_diP_kinase_AS"/>
</dbReference>
<dbReference type="NCBIfam" id="NF001908">
    <property type="entry name" value="PRK00668.1"/>
    <property type="match status" value="1"/>
</dbReference>
<dbReference type="PANTHER" id="PTHR46161">
    <property type="entry name" value="NUCLEOSIDE DIPHOSPHATE KINASE"/>
    <property type="match status" value="1"/>
</dbReference>
<dbReference type="PANTHER" id="PTHR46161:SF3">
    <property type="entry name" value="NUCLEOSIDE DIPHOSPHATE KINASE DDB_G0292928-RELATED"/>
    <property type="match status" value="1"/>
</dbReference>
<dbReference type="Pfam" id="PF00334">
    <property type="entry name" value="NDK"/>
    <property type="match status" value="1"/>
</dbReference>
<dbReference type="PRINTS" id="PR01243">
    <property type="entry name" value="NUCDPKINASE"/>
</dbReference>
<dbReference type="SMART" id="SM00562">
    <property type="entry name" value="NDK"/>
    <property type="match status" value="1"/>
</dbReference>
<dbReference type="SUPFAM" id="SSF54919">
    <property type="entry name" value="Nucleoside diphosphate kinase, NDK"/>
    <property type="match status" value="1"/>
</dbReference>
<dbReference type="PROSITE" id="PS00469">
    <property type="entry name" value="NDPK"/>
    <property type="match status" value="1"/>
</dbReference>
<dbReference type="PROSITE" id="PS51374">
    <property type="entry name" value="NDPK_LIKE"/>
    <property type="match status" value="1"/>
</dbReference>
<accession>Q667Z5</accession>
<evidence type="ECO:0000255" key="1">
    <source>
        <dbReference type="HAMAP-Rule" id="MF_00451"/>
    </source>
</evidence>
<feature type="chain" id="PRO_0000137085" description="Nucleoside diphosphate kinase">
    <location>
        <begin position="1"/>
        <end position="142"/>
    </location>
</feature>
<feature type="active site" description="Pros-phosphohistidine intermediate" evidence="1">
    <location>
        <position position="117"/>
    </location>
</feature>
<feature type="binding site" evidence="1">
    <location>
        <position position="11"/>
    </location>
    <ligand>
        <name>ATP</name>
        <dbReference type="ChEBI" id="CHEBI:30616"/>
    </ligand>
</feature>
<feature type="binding site" evidence="1">
    <location>
        <position position="59"/>
    </location>
    <ligand>
        <name>ATP</name>
        <dbReference type="ChEBI" id="CHEBI:30616"/>
    </ligand>
</feature>
<feature type="binding site" evidence="1">
    <location>
        <position position="87"/>
    </location>
    <ligand>
        <name>ATP</name>
        <dbReference type="ChEBI" id="CHEBI:30616"/>
    </ligand>
</feature>
<feature type="binding site" evidence="1">
    <location>
        <position position="93"/>
    </location>
    <ligand>
        <name>ATP</name>
        <dbReference type="ChEBI" id="CHEBI:30616"/>
    </ligand>
</feature>
<feature type="binding site" evidence="1">
    <location>
        <position position="104"/>
    </location>
    <ligand>
        <name>ATP</name>
        <dbReference type="ChEBI" id="CHEBI:30616"/>
    </ligand>
</feature>
<feature type="binding site" evidence="1">
    <location>
        <position position="114"/>
    </location>
    <ligand>
        <name>ATP</name>
        <dbReference type="ChEBI" id="CHEBI:30616"/>
    </ligand>
</feature>
<comment type="function">
    <text evidence="1">Major role in the synthesis of nucleoside triphosphates other than ATP. The ATP gamma phosphate is transferred to the NDP beta phosphate via a ping-pong mechanism, using a phosphorylated active-site intermediate.</text>
</comment>
<comment type="catalytic activity">
    <reaction evidence="1">
        <text>a 2'-deoxyribonucleoside 5'-diphosphate + ATP = a 2'-deoxyribonucleoside 5'-triphosphate + ADP</text>
        <dbReference type="Rhea" id="RHEA:44640"/>
        <dbReference type="ChEBI" id="CHEBI:30616"/>
        <dbReference type="ChEBI" id="CHEBI:61560"/>
        <dbReference type="ChEBI" id="CHEBI:73316"/>
        <dbReference type="ChEBI" id="CHEBI:456216"/>
        <dbReference type="EC" id="2.7.4.6"/>
    </reaction>
</comment>
<comment type="catalytic activity">
    <reaction evidence="1">
        <text>a ribonucleoside 5'-diphosphate + ATP = a ribonucleoside 5'-triphosphate + ADP</text>
        <dbReference type="Rhea" id="RHEA:18113"/>
        <dbReference type="ChEBI" id="CHEBI:30616"/>
        <dbReference type="ChEBI" id="CHEBI:57930"/>
        <dbReference type="ChEBI" id="CHEBI:61557"/>
        <dbReference type="ChEBI" id="CHEBI:456216"/>
        <dbReference type="EC" id="2.7.4.6"/>
    </reaction>
</comment>
<comment type="cofactor">
    <cofactor evidence="1">
        <name>Mg(2+)</name>
        <dbReference type="ChEBI" id="CHEBI:18420"/>
    </cofactor>
</comment>
<comment type="subunit">
    <text evidence="1">Homotetramer.</text>
</comment>
<comment type="subcellular location">
    <subcellularLocation>
        <location evidence="1">Cytoplasm</location>
    </subcellularLocation>
</comment>
<comment type="similarity">
    <text evidence="1">Belongs to the NDK family.</text>
</comment>
<keyword id="KW-0067">ATP-binding</keyword>
<keyword id="KW-0963">Cytoplasm</keyword>
<keyword id="KW-0418">Kinase</keyword>
<keyword id="KW-0460">Magnesium</keyword>
<keyword id="KW-0479">Metal-binding</keyword>
<keyword id="KW-0546">Nucleotide metabolism</keyword>
<keyword id="KW-0547">Nucleotide-binding</keyword>
<keyword id="KW-0597">Phosphoprotein</keyword>
<keyword id="KW-0808">Transferase</keyword>
<organism>
    <name type="scientific">Yersinia pseudotuberculosis serotype I (strain IP32953)</name>
    <dbReference type="NCBI Taxonomy" id="273123"/>
    <lineage>
        <taxon>Bacteria</taxon>
        <taxon>Pseudomonadati</taxon>
        <taxon>Pseudomonadota</taxon>
        <taxon>Gammaproteobacteria</taxon>
        <taxon>Enterobacterales</taxon>
        <taxon>Yersiniaceae</taxon>
        <taxon>Yersinia</taxon>
    </lineage>
</organism>
<reference key="1">
    <citation type="journal article" date="2004" name="Proc. Natl. Acad. Sci. U.S.A.">
        <title>Insights into the evolution of Yersinia pestis through whole-genome comparison with Yersinia pseudotuberculosis.</title>
        <authorList>
            <person name="Chain P.S.G."/>
            <person name="Carniel E."/>
            <person name="Larimer F.W."/>
            <person name="Lamerdin J."/>
            <person name="Stoutland P.O."/>
            <person name="Regala W.M."/>
            <person name="Georgescu A.M."/>
            <person name="Vergez L.M."/>
            <person name="Land M.L."/>
            <person name="Motin V.L."/>
            <person name="Brubaker R.R."/>
            <person name="Fowler J."/>
            <person name="Hinnebusch J."/>
            <person name="Marceau M."/>
            <person name="Medigue C."/>
            <person name="Simonet M."/>
            <person name="Chenal-Francisque V."/>
            <person name="Souza B."/>
            <person name="Dacheux D."/>
            <person name="Elliott J.M."/>
            <person name="Derbise A."/>
            <person name="Hauser L.J."/>
            <person name="Garcia E."/>
        </authorList>
    </citation>
    <scope>NUCLEOTIDE SEQUENCE [LARGE SCALE GENOMIC DNA]</scope>
    <source>
        <strain>IP32953</strain>
    </source>
</reference>